<name>GCSPB_AQUAE</name>
<gene>
    <name evidence="1" type="primary">gcvPB</name>
    <name type="synonym">gcsP1</name>
    <name type="ordered locus">aq_1903</name>
</gene>
<sequence>MELIFEKSKKGRKGYKLPELDVEEVNIKEYLPEEYLREELDFPEVSELDVVRHYTNLSHLNYAVDTTMVPLGSCTMKYNPRINEELVNKKEFLNVHPLTPEEYIQPLLKLVYELKELLKELGGFAEVSLQPAAGAHGELLGLLLIHAYHQDRGNKEKKVVLIPDSAHGTNPASAAICGFDIKVVKSDKKGELDFEDFIKKLDERVAALMITNPNTLGIFERKIKEIAEELHKRDALLYMDGANFNALVGRFKPGEWGVDVMHFNLHKTFSTPHGGGGPGAGPVGVSERLKPYLPVPQIEYDGKKYYLNWNIEKSVGKILAFHGHFLVWLKALAYILTYGKDIKKVSEYAVLNARYLKHLLKGVFKDPYPESPCMHEFVLSATNLTKYGVRASDVAKRILDYGFYAPTMYFPLIVREALMIEPTETENPDTLKKFALILRKIVKEAKEKPEILKKAPHRTPVRRIKEAEANRNLILKFKDIKE</sequence>
<dbReference type="EC" id="1.4.4.2" evidence="1"/>
<dbReference type="EMBL" id="AE000657">
    <property type="protein sequence ID" value="AAC07701.1"/>
    <property type="molecule type" value="Genomic_DNA"/>
</dbReference>
<dbReference type="PIR" id="H70463">
    <property type="entry name" value="H70463"/>
</dbReference>
<dbReference type="RefSeq" id="NP_214308.1">
    <property type="nucleotide sequence ID" value="NC_000918.1"/>
</dbReference>
<dbReference type="RefSeq" id="WP_010881244.1">
    <property type="nucleotide sequence ID" value="NC_000918.1"/>
</dbReference>
<dbReference type="SMR" id="O67740"/>
<dbReference type="STRING" id="224324.aq_1903"/>
<dbReference type="EnsemblBacteria" id="AAC07701">
    <property type="protein sequence ID" value="AAC07701"/>
    <property type="gene ID" value="aq_1903"/>
</dbReference>
<dbReference type="KEGG" id="aae:aq_1903"/>
<dbReference type="PATRIC" id="fig|224324.8.peg.1474"/>
<dbReference type="eggNOG" id="COG1003">
    <property type="taxonomic scope" value="Bacteria"/>
</dbReference>
<dbReference type="HOGENOM" id="CLU_004620_5_0_0"/>
<dbReference type="InParanoid" id="O67740"/>
<dbReference type="OrthoDB" id="9801272at2"/>
<dbReference type="Proteomes" id="UP000000798">
    <property type="component" value="Chromosome"/>
</dbReference>
<dbReference type="GO" id="GO:0005829">
    <property type="term" value="C:cytosol"/>
    <property type="evidence" value="ECO:0000318"/>
    <property type="project" value="GO_Central"/>
</dbReference>
<dbReference type="GO" id="GO:0005960">
    <property type="term" value="C:glycine cleavage complex"/>
    <property type="evidence" value="ECO:0000318"/>
    <property type="project" value="GO_Central"/>
</dbReference>
<dbReference type="GO" id="GO:0016594">
    <property type="term" value="F:glycine binding"/>
    <property type="evidence" value="ECO:0000318"/>
    <property type="project" value="GO_Central"/>
</dbReference>
<dbReference type="GO" id="GO:0004375">
    <property type="term" value="F:glycine dehydrogenase (decarboxylating) activity"/>
    <property type="evidence" value="ECO:0000318"/>
    <property type="project" value="GO_Central"/>
</dbReference>
<dbReference type="GO" id="GO:0030170">
    <property type="term" value="F:pyridoxal phosphate binding"/>
    <property type="evidence" value="ECO:0000318"/>
    <property type="project" value="GO_Central"/>
</dbReference>
<dbReference type="GO" id="GO:0019464">
    <property type="term" value="P:glycine decarboxylation via glycine cleavage system"/>
    <property type="evidence" value="ECO:0000318"/>
    <property type="project" value="GO_Central"/>
</dbReference>
<dbReference type="CDD" id="cd00613">
    <property type="entry name" value="GDC-P"/>
    <property type="match status" value="1"/>
</dbReference>
<dbReference type="FunFam" id="3.40.640.10:FF:000224">
    <property type="entry name" value="Probable glycine dehydrogenase (decarboxylating) subunit 2"/>
    <property type="match status" value="1"/>
</dbReference>
<dbReference type="FunFam" id="3.90.1150.10:FF:000014">
    <property type="entry name" value="Probable glycine dehydrogenase (decarboxylating) subunit 2"/>
    <property type="match status" value="1"/>
</dbReference>
<dbReference type="Gene3D" id="6.20.440.10">
    <property type="match status" value="1"/>
</dbReference>
<dbReference type="Gene3D" id="3.90.1150.10">
    <property type="entry name" value="Aspartate Aminotransferase, domain 1"/>
    <property type="match status" value="1"/>
</dbReference>
<dbReference type="Gene3D" id="3.40.640.10">
    <property type="entry name" value="Type I PLP-dependent aspartate aminotransferase-like (Major domain)"/>
    <property type="match status" value="1"/>
</dbReference>
<dbReference type="HAMAP" id="MF_00713">
    <property type="entry name" value="GcvPB"/>
    <property type="match status" value="1"/>
</dbReference>
<dbReference type="InterPro" id="IPR000192">
    <property type="entry name" value="Aminotrans_V_dom"/>
</dbReference>
<dbReference type="InterPro" id="IPR023012">
    <property type="entry name" value="GcvPB"/>
</dbReference>
<dbReference type="InterPro" id="IPR049316">
    <property type="entry name" value="GDC-P_C"/>
</dbReference>
<dbReference type="InterPro" id="IPR020581">
    <property type="entry name" value="GDC_P"/>
</dbReference>
<dbReference type="InterPro" id="IPR015424">
    <property type="entry name" value="PyrdxlP-dep_Trfase"/>
</dbReference>
<dbReference type="InterPro" id="IPR015421">
    <property type="entry name" value="PyrdxlP-dep_Trfase_major"/>
</dbReference>
<dbReference type="InterPro" id="IPR015422">
    <property type="entry name" value="PyrdxlP-dep_Trfase_small"/>
</dbReference>
<dbReference type="NCBIfam" id="NF003346">
    <property type="entry name" value="PRK04366.1"/>
    <property type="match status" value="1"/>
</dbReference>
<dbReference type="PANTHER" id="PTHR11773:SF1">
    <property type="entry name" value="GLYCINE DEHYDROGENASE (DECARBOXYLATING), MITOCHONDRIAL"/>
    <property type="match status" value="1"/>
</dbReference>
<dbReference type="PANTHER" id="PTHR11773">
    <property type="entry name" value="GLYCINE DEHYDROGENASE, DECARBOXYLATING"/>
    <property type="match status" value="1"/>
</dbReference>
<dbReference type="Pfam" id="PF00266">
    <property type="entry name" value="Aminotran_5"/>
    <property type="match status" value="1"/>
</dbReference>
<dbReference type="Pfam" id="PF21478">
    <property type="entry name" value="GcvP2_C"/>
    <property type="match status" value="1"/>
</dbReference>
<dbReference type="SUPFAM" id="SSF53383">
    <property type="entry name" value="PLP-dependent transferases"/>
    <property type="match status" value="1"/>
</dbReference>
<proteinExistence type="inferred from homology"/>
<reference key="1">
    <citation type="journal article" date="1998" name="Nature">
        <title>The complete genome of the hyperthermophilic bacterium Aquifex aeolicus.</title>
        <authorList>
            <person name="Deckert G."/>
            <person name="Warren P.V."/>
            <person name="Gaasterland T."/>
            <person name="Young W.G."/>
            <person name="Lenox A.L."/>
            <person name="Graham D.E."/>
            <person name="Overbeek R."/>
            <person name="Snead M.A."/>
            <person name="Keller M."/>
            <person name="Aujay M."/>
            <person name="Huber R."/>
            <person name="Feldman R.A."/>
            <person name="Short J.M."/>
            <person name="Olsen G.J."/>
            <person name="Swanson R.V."/>
        </authorList>
    </citation>
    <scope>NUCLEOTIDE SEQUENCE [LARGE SCALE GENOMIC DNA]</scope>
    <source>
        <strain>VF5</strain>
    </source>
</reference>
<accession>O67740</accession>
<evidence type="ECO:0000255" key="1">
    <source>
        <dbReference type="HAMAP-Rule" id="MF_00713"/>
    </source>
</evidence>
<comment type="function">
    <text evidence="1">The glycine cleavage system catalyzes the degradation of glycine. The P protein binds the alpha-amino group of glycine through its pyridoxal phosphate cofactor; CO(2) is released and the remaining methylamine moiety is then transferred to the lipoamide cofactor of the H protein.</text>
</comment>
<comment type="catalytic activity">
    <reaction evidence="1">
        <text>N(6)-[(R)-lipoyl]-L-lysyl-[glycine-cleavage complex H protein] + glycine + H(+) = N(6)-[(R)-S(8)-aminomethyldihydrolipoyl]-L-lysyl-[glycine-cleavage complex H protein] + CO2</text>
        <dbReference type="Rhea" id="RHEA:24304"/>
        <dbReference type="Rhea" id="RHEA-COMP:10494"/>
        <dbReference type="Rhea" id="RHEA-COMP:10495"/>
        <dbReference type="ChEBI" id="CHEBI:15378"/>
        <dbReference type="ChEBI" id="CHEBI:16526"/>
        <dbReference type="ChEBI" id="CHEBI:57305"/>
        <dbReference type="ChEBI" id="CHEBI:83099"/>
        <dbReference type="ChEBI" id="CHEBI:83143"/>
        <dbReference type="EC" id="1.4.4.2"/>
    </reaction>
</comment>
<comment type="cofactor">
    <cofactor evidence="1">
        <name>pyridoxal 5'-phosphate</name>
        <dbReference type="ChEBI" id="CHEBI:597326"/>
    </cofactor>
</comment>
<comment type="subunit">
    <text evidence="1">The glycine cleavage system is composed of four proteins: P, T, L and H. In this organism, the P 'protein' is a heterodimer of two subunits.</text>
</comment>
<comment type="similarity">
    <text evidence="1">Belongs to the GcvP family. C-terminal subunit subfamily.</text>
</comment>
<protein>
    <recommendedName>
        <fullName evidence="1">Probable glycine dehydrogenase (decarboxylating) subunit 2</fullName>
        <ecNumber evidence="1">1.4.4.2</ecNumber>
    </recommendedName>
    <alternativeName>
        <fullName evidence="1">Glycine cleavage system P-protein subunit 2</fullName>
    </alternativeName>
    <alternativeName>
        <fullName evidence="1">Glycine decarboxylase subunit 2</fullName>
    </alternativeName>
    <alternativeName>
        <fullName evidence="1">Glycine dehydrogenase (aminomethyl-transferring) subunit 2</fullName>
    </alternativeName>
</protein>
<keyword id="KW-0560">Oxidoreductase</keyword>
<keyword id="KW-0663">Pyridoxal phosphate</keyword>
<keyword id="KW-1185">Reference proteome</keyword>
<organism>
    <name type="scientific">Aquifex aeolicus (strain VF5)</name>
    <dbReference type="NCBI Taxonomy" id="224324"/>
    <lineage>
        <taxon>Bacteria</taxon>
        <taxon>Pseudomonadati</taxon>
        <taxon>Aquificota</taxon>
        <taxon>Aquificia</taxon>
        <taxon>Aquificales</taxon>
        <taxon>Aquificaceae</taxon>
        <taxon>Aquifex</taxon>
    </lineage>
</organism>
<feature type="chain" id="PRO_0000166993" description="Probable glycine dehydrogenase (decarboxylating) subunit 2">
    <location>
        <begin position="1"/>
        <end position="482"/>
    </location>
</feature>
<feature type="modified residue" description="N6-(pyridoxal phosphate)lysine" evidence="1">
    <location>
        <position position="267"/>
    </location>
</feature>